<dbReference type="EMBL" id="EU909368">
    <property type="protein sequence ID" value="ACG68885.1"/>
    <property type="molecule type" value="mRNA"/>
</dbReference>
<dbReference type="SMR" id="B5B3U4"/>
<dbReference type="GlyCosmos" id="B5B3U4">
    <property type="glycosylation" value="1 site, No reported glycans"/>
</dbReference>
<dbReference type="Proteomes" id="UP000515129">
    <property type="component" value="Unplaced"/>
</dbReference>
<dbReference type="GO" id="GO:0005615">
    <property type="term" value="C:extracellular space"/>
    <property type="evidence" value="ECO:0007669"/>
    <property type="project" value="UniProtKB-KW"/>
</dbReference>
<dbReference type="GO" id="GO:0005125">
    <property type="term" value="F:cytokine activity"/>
    <property type="evidence" value="ECO:0007669"/>
    <property type="project" value="UniProtKB-KW"/>
</dbReference>
<dbReference type="GO" id="GO:0005133">
    <property type="term" value="F:type II interferon receptor binding"/>
    <property type="evidence" value="ECO:0007669"/>
    <property type="project" value="InterPro"/>
</dbReference>
<dbReference type="GO" id="GO:0006955">
    <property type="term" value="P:immune response"/>
    <property type="evidence" value="ECO:0007669"/>
    <property type="project" value="InterPro"/>
</dbReference>
<dbReference type="Gene3D" id="1.20.1250.10">
    <property type="match status" value="1"/>
</dbReference>
<dbReference type="InterPro" id="IPR009079">
    <property type="entry name" value="4_helix_cytokine-like_core"/>
</dbReference>
<dbReference type="InterPro" id="IPR002069">
    <property type="entry name" value="Interferon_gamma"/>
</dbReference>
<dbReference type="PANTHER" id="PTHR11419">
    <property type="entry name" value="INTERFERON GAMMA"/>
    <property type="match status" value="1"/>
</dbReference>
<dbReference type="PANTHER" id="PTHR11419:SF0">
    <property type="entry name" value="INTERFERON GAMMA"/>
    <property type="match status" value="1"/>
</dbReference>
<dbReference type="Pfam" id="PF00714">
    <property type="entry name" value="IFN-gamma"/>
    <property type="match status" value="1"/>
</dbReference>
<dbReference type="SUPFAM" id="SSF47266">
    <property type="entry name" value="4-helical cytokines"/>
    <property type="match status" value="1"/>
</dbReference>
<evidence type="ECO:0000255" key="1"/>
<evidence type="ECO:0000255" key="2">
    <source>
        <dbReference type="PROSITE-ProRule" id="PRU00498"/>
    </source>
</evidence>
<evidence type="ECO:0000269" key="3">
    <source>
    </source>
</evidence>
<evidence type="ECO:0000269" key="4">
    <source>
    </source>
</evidence>
<evidence type="ECO:0000269" key="5">
    <source>
    </source>
</evidence>
<evidence type="ECO:0000303" key="6">
    <source>
    </source>
</evidence>
<evidence type="ECO:0000305" key="7"/>
<evidence type="ECO:0000305" key="8">
    <source>
    </source>
</evidence>
<evidence type="ECO:0000305" key="9">
    <source>
    </source>
</evidence>
<evidence type="ECO:0000305" key="10">
    <source>
    </source>
</evidence>
<evidence type="ECO:0000312" key="11">
    <source>
        <dbReference type="EMBL" id="ACG68885.1"/>
    </source>
</evidence>
<proteinExistence type="evidence at protein level"/>
<feature type="signal peptide" evidence="1">
    <location>
        <begin position="1"/>
        <end position="21"/>
    </location>
</feature>
<feature type="chain" id="PRO_5002830045" description="Interferon gamma 1" evidence="1">
    <location>
        <begin position="22"/>
        <end position="182"/>
    </location>
</feature>
<feature type="glycosylation site" description="N-linked (GlcNAc...) asparagine" evidence="2">
    <location>
        <position position="93"/>
    </location>
</feature>
<protein>
    <recommendedName>
        <fullName evidence="7">Interferon gamma 1</fullName>
    </recommendedName>
    <alternativeName>
        <fullName evidence="6">Interferon gamma</fullName>
    </alternativeName>
    <alternativeName>
        <fullName evidence="6">Interferon gamma 2</fullName>
    </alternativeName>
</protein>
<keyword id="KW-0202">Cytokine</keyword>
<keyword id="KW-0325">Glycoprotein</keyword>
<keyword id="KW-1185">Reference proteome</keyword>
<keyword id="KW-0964">Secreted</keyword>
<keyword id="KW-0732">Signal</keyword>
<comment type="function">
    <text evidence="3 4 5">Cytokine which binds to interferon gamma receptor 1-like (ifngr1l) (PubMed:18831986, PubMed:19577303, PubMed:20507977). Has activating effects on primary macrophages and neutrophils (PubMed:18831986, PubMed:20507977). Induces nitric oxide production and phagocytic responses in macrophages (PubMed:18831986, PubMed:20507977). Primes macrophages and neutrophils for production of reactive oxygen intermediates (ROI) (PubMed:18831986, PubMed:20507977). Stimulates phosphorylation and nuclear localization of the JAK/STAT signal transducer stat1 (PubMed:20507977). Promotes increased expression of a number of genes important for macrophage activity, including the interferon regulatory factors irf1, irf2, irf8 and irf9 (PubMed:18831986, PubMed:20507977).</text>
</comment>
<comment type="subunit">
    <text evidence="4">Homodimer.</text>
</comment>
<comment type="subcellular location">
    <subcellularLocation>
        <location evidence="8 9 10">Secreted</location>
    </subcellularLocation>
</comment>
<comment type="tissue specificity">
    <text evidence="3">Highly expressed in spleen. Also detected at lower levels in brain, gill, kidney, heart, intestine and muscle. In immune cell populations, has highest expression in peripheral blood leukocytes and splenocytes. Detected in kidney-derived monocytes, neutrophils, macrophages and leukocytes.</text>
</comment>
<comment type="induction">
    <text evidence="3">Strongly up-regulated in kidney leukocytes in response to phytohaemagglutinin (PHA). Also up-regulated to a lesser extent by polyinosinic:polycytidylic acid (poly(I:C)).</text>
</comment>
<comment type="similarity">
    <text evidence="7">Belongs to the type II (or gamma) interferon family.</text>
</comment>
<sequence length="182" mass="21517">MIAQNMTIFFWGVCLLTSGWATYSEASVPENLDKSIDELKAYYIKDDHEIHNAHPVFLRVLKDLKVNLEEPEQNLLMSIIMDTYSRIFTRMENDSLDEATKERIAHVQEHLKKLRENYFPGKSAELKTYAETLWAIKEDDPVIQRKALFELKRVYREATLLKNLKNKERRRRQAKNTKNLKS</sequence>
<organism evidence="11">
    <name type="scientific">Carassius auratus</name>
    <name type="common">Goldfish</name>
    <dbReference type="NCBI Taxonomy" id="7957"/>
    <lineage>
        <taxon>Eukaryota</taxon>
        <taxon>Metazoa</taxon>
        <taxon>Chordata</taxon>
        <taxon>Craniata</taxon>
        <taxon>Vertebrata</taxon>
        <taxon>Euteleostomi</taxon>
        <taxon>Actinopterygii</taxon>
        <taxon>Neopterygii</taxon>
        <taxon>Teleostei</taxon>
        <taxon>Ostariophysi</taxon>
        <taxon>Cypriniformes</taxon>
        <taxon>Cyprinidae</taxon>
        <taxon>Cyprininae</taxon>
        <taxon>Carassius</taxon>
    </lineage>
</organism>
<gene>
    <name evidence="7" type="primary">ifng1</name>
</gene>
<reference evidence="11" key="1">
    <citation type="journal article" date="2009" name="Dev. Comp. Immunol.">
        <title>Molecular characterization, expression and functional analysis of goldfish (Carassius auratus L.) interferon gamma.</title>
        <authorList>
            <person name="Grayfer L."/>
            <person name="Belosevic M."/>
        </authorList>
    </citation>
    <scope>NUCLEOTIDE SEQUENCE [MRNA]</scope>
    <scope>FUNCTION</scope>
    <scope>SUBCELLULAR LOCATION</scope>
    <scope>TISSUE SPECIFICITY</scope>
    <scope>INDUCTION</scope>
</reference>
<reference evidence="7" key="2">
    <citation type="journal article" date="2009" name="Mol. Immunol.">
        <title>Molecular characterization of novel interferon gamma receptor 1 isoforms in zebrafish (Danio rerio) and goldfish (Carassius auratus L.).</title>
        <authorList>
            <person name="Grayfer L."/>
            <person name="Belosevic M."/>
        </authorList>
    </citation>
    <scope>FUNCTION</scope>
    <scope>SUBUNIT</scope>
    <scope>SUBCELLULAR LOCATION</scope>
</reference>
<reference evidence="7" key="3">
    <citation type="journal article" date="2010" name="J. Biol. Chem.">
        <title>Comparison of macrophage antimicrobial responses induced by type II interferons of the goldfish (Carassius auratus L.).</title>
        <authorList>
            <person name="Grayfer L."/>
            <person name="Garcia E.G."/>
            <person name="Belosevic M."/>
        </authorList>
    </citation>
    <scope>FUNCTION</scope>
    <scope>SUBCELLULAR LOCATION</scope>
</reference>
<name>IFNG1_CARAU</name>
<accession>B5B3U4</accession>